<comment type="function">
    <text evidence="2">One of the components of the core complex of photosystem II (PSII), required for its stability and/or assembly. PSII is a light-driven water:plastoquinone oxidoreductase that uses light energy to abstract electrons from H(2)O, generating O(2) and a proton gradient subsequently used for ATP formation. It consists of a core antenna complex that captures photons, and an electron transfer chain that converts photonic excitation into a charge separation.</text>
</comment>
<comment type="subunit">
    <text evidence="2">PSII is composed of 1 copy each of membrane proteins PsbA, PsbB, PsbC, PsbD, PsbE, PsbF, PsbH, PsbI, PsbJ, PsbK, PsbL, PsbM, PsbT, PsbX, PsbY, PsbZ, Psb30/Ycf12, at least 3 peripheral proteins of the oxygen-evolving complex and a large number of cofactors. It forms dimeric complexes.</text>
</comment>
<comment type="subcellular location">
    <subcellularLocation>
        <location evidence="2">Plastid</location>
        <location evidence="2">Chloroplast thylakoid membrane</location>
        <topology evidence="2">Single-pass membrane protein</topology>
    </subcellularLocation>
</comment>
<comment type="PTM">
    <text evidence="2">Phosphorylation is a light-dependent reaction catalyzed by a membrane-bound kinase; phosphorylation occurs on Thr residue(s) in the N-terminus of the protein.</text>
</comment>
<comment type="similarity">
    <text evidence="2">Belongs to the PsbH family.</text>
</comment>
<proteinExistence type="inferred from homology"/>
<reference key="1">
    <citation type="journal article" date="2004" name="Gene">
        <title>The complete nucleotide sequence of wild rice (Oryza nivara) chloroplast genome: first genome wide comparative sequence analysis of wild and cultivated rice.</title>
        <authorList>
            <person name="Masood M.S."/>
            <person name="Nishikawa T."/>
            <person name="Fukuoka S."/>
            <person name="Njenga P.K."/>
            <person name="Tsudzuki T."/>
            <person name="Kadowaki K."/>
        </authorList>
    </citation>
    <scope>NUCLEOTIDE SEQUENCE [LARGE SCALE GENOMIC DNA]</scope>
    <source>
        <strain evidence="4">cv. SL10</strain>
    </source>
</reference>
<feature type="initiator methionine" description="Removed" evidence="1">
    <location>
        <position position="1"/>
    </location>
</feature>
<feature type="chain" id="PRO_0000070523" description="Photosystem II reaction center protein H">
    <location>
        <begin position="2"/>
        <end position="73"/>
    </location>
</feature>
<feature type="transmembrane region" description="Helical" evidence="2">
    <location>
        <begin position="41"/>
        <end position="61"/>
    </location>
</feature>
<feature type="region of interest" description="Disordered" evidence="3">
    <location>
        <begin position="1"/>
        <end position="21"/>
    </location>
</feature>
<feature type="modified residue" description="Phosphothreonine" evidence="2">
    <location>
        <position position="3"/>
    </location>
</feature>
<feature type="modified residue" description="Phosphothreonine" evidence="2">
    <location>
        <position position="5"/>
    </location>
</feature>
<protein>
    <recommendedName>
        <fullName evidence="2">Photosystem II reaction center protein H</fullName>
        <shortName evidence="2">PSII-H</shortName>
    </recommendedName>
    <alternativeName>
        <fullName evidence="2">Photosystem II 10 kDa phosphoprotein</fullName>
    </alternativeName>
</protein>
<sequence length="73" mass="7886">MATQTVEDSSRPGPRQTRVGNLLKPLNSEYGKVAPGWGTTPFMGVAMALFAVFLSIILEIYNSSVLLDGILMN</sequence>
<organism>
    <name type="scientific">Oryza nivara</name>
    <name type="common">Indian wild rice</name>
    <name type="synonym">Oryza sativa f. spontanea</name>
    <dbReference type="NCBI Taxonomy" id="4536"/>
    <lineage>
        <taxon>Eukaryota</taxon>
        <taxon>Viridiplantae</taxon>
        <taxon>Streptophyta</taxon>
        <taxon>Embryophyta</taxon>
        <taxon>Tracheophyta</taxon>
        <taxon>Spermatophyta</taxon>
        <taxon>Magnoliopsida</taxon>
        <taxon>Liliopsida</taxon>
        <taxon>Poales</taxon>
        <taxon>Poaceae</taxon>
        <taxon>BOP clade</taxon>
        <taxon>Oryzoideae</taxon>
        <taxon>Oryzeae</taxon>
        <taxon>Oryzinae</taxon>
        <taxon>Oryza</taxon>
    </lineage>
</organism>
<geneLocation type="chloroplast"/>
<gene>
    <name evidence="2" type="primary">psbH</name>
</gene>
<evidence type="ECO:0000250" key="1">
    <source>
        <dbReference type="UniProtKB" id="P56780"/>
    </source>
</evidence>
<evidence type="ECO:0000255" key="2">
    <source>
        <dbReference type="HAMAP-Rule" id="MF_00752"/>
    </source>
</evidence>
<evidence type="ECO:0000256" key="3">
    <source>
        <dbReference type="SAM" id="MobiDB-lite"/>
    </source>
</evidence>
<evidence type="ECO:0000312" key="4">
    <source>
        <dbReference type="Proteomes" id="UP000006591"/>
    </source>
</evidence>
<accession>Q6ENE5</accession>
<keyword id="KW-0150">Chloroplast</keyword>
<keyword id="KW-0472">Membrane</keyword>
<keyword id="KW-0597">Phosphoprotein</keyword>
<keyword id="KW-0602">Photosynthesis</keyword>
<keyword id="KW-0604">Photosystem II</keyword>
<keyword id="KW-0934">Plastid</keyword>
<keyword id="KW-1185">Reference proteome</keyword>
<keyword id="KW-0793">Thylakoid</keyword>
<keyword id="KW-0812">Transmembrane</keyword>
<keyword id="KW-1133">Transmembrane helix</keyword>
<dbReference type="EMBL" id="AP006728">
    <property type="protein sequence ID" value="BAD26807.1"/>
    <property type="molecule type" value="Genomic_DNA"/>
</dbReference>
<dbReference type="RefSeq" id="YP_052778.1">
    <property type="nucleotide sequence ID" value="NC_005973.1"/>
</dbReference>
<dbReference type="SMR" id="Q6ENE5"/>
<dbReference type="STRING" id="4536.Q6ENE5"/>
<dbReference type="GeneID" id="2885953"/>
<dbReference type="Proteomes" id="UP000006591">
    <property type="component" value="Chloroplast"/>
</dbReference>
<dbReference type="GO" id="GO:0009535">
    <property type="term" value="C:chloroplast thylakoid membrane"/>
    <property type="evidence" value="ECO:0007669"/>
    <property type="project" value="UniProtKB-SubCell"/>
</dbReference>
<dbReference type="GO" id="GO:0009523">
    <property type="term" value="C:photosystem II"/>
    <property type="evidence" value="ECO:0007669"/>
    <property type="project" value="UniProtKB-KW"/>
</dbReference>
<dbReference type="GO" id="GO:0009536">
    <property type="term" value="C:plastid"/>
    <property type="evidence" value="ECO:0000305"/>
    <property type="project" value="Gramene"/>
</dbReference>
<dbReference type="GO" id="GO:0042301">
    <property type="term" value="F:phosphate ion binding"/>
    <property type="evidence" value="ECO:0007669"/>
    <property type="project" value="InterPro"/>
</dbReference>
<dbReference type="GO" id="GO:0015979">
    <property type="term" value="P:photosynthesis"/>
    <property type="evidence" value="ECO:0007669"/>
    <property type="project" value="UniProtKB-UniRule"/>
</dbReference>
<dbReference type="GO" id="GO:0050821">
    <property type="term" value="P:protein stabilization"/>
    <property type="evidence" value="ECO:0007669"/>
    <property type="project" value="InterPro"/>
</dbReference>
<dbReference type="FunFam" id="1.20.5.880:FF:000001">
    <property type="entry name" value="Photosystem II reaction center protein H"/>
    <property type="match status" value="1"/>
</dbReference>
<dbReference type="Gene3D" id="1.20.5.880">
    <property type="entry name" value="Photosystem II reaction center protein H"/>
    <property type="match status" value="1"/>
</dbReference>
<dbReference type="HAMAP" id="MF_00752">
    <property type="entry name" value="PSII_PsbH"/>
    <property type="match status" value="1"/>
</dbReference>
<dbReference type="InterPro" id="IPR001056">
    <property type="entry name" value="PSII_PsbH"/>
</dbReference>
<dbReference type="InterPro" id="IPR036863">
    <property type="entry name" value="PSII_PsbH_sf"/>
</dbReference>
<dbReference type="NCBIfam" id="NF002728">
    <property type="entry name" value="PRK02624.1"/>
    <property type="match status" value="1"/>
</dbReference>
<dbReference type="PANTHER" id="PTHR34469">
    <property type="entry name" value="PHOTOSYSTEM II REACTION CENTER PROTEIN H"/>
    <property type="match status" value="1"/>
</dbReference>
<dbReference type="PANTHER" id="PTHR34469:SF4">
    <property type="entry name" value="PHOTOSYSTEM II REACTION CENTER PROTEIN H"/>
    <property type="match status" value="1"/>
</dbReference>
<dbReference type="Pfam" id="PF00737">
    <property type="entry name" value="PsbH"/>
    <property type="match status" value="1"/>
</dbReference>
<dbReference type="SUPFAM" id="SSF161025">
    <property type="entry name" value="Photosystem II 10 kDa phosphoprotein PsbH"/>
    <property type="match status" value="1"/>
</dbReference>
<name>PSBH_ORYNI</name>